<proteinExistence type="inferred from homology"/>
<reference key="1">
    <citation type="journal article" date="2007" name="PLoS Genet.">
        <title>Patterns and implications of gene gain and loss in the evolution of Prochlorococcus.</title>
        <authorList>
            <person name="Kettler G.C."/>
            <person name="Martiny A.C."/>
            <person name="Huang K."/>
            <person name="Zucker J."/>
            <person name="Coleman M.L."/>
            <person name="Rodrigue S."/>
            <person name="Chen F."/>
            <person name="Lapidus A."/>
            <person name="Ferriera S."/>
            <person name="Johnson J."/>
            <person name="Steglich C."/>
            <person name="Church G.M."/>
            <person name="Richardson P."/>
            <person name="Chisholm S.W."/>
        </authorList>
    </citation>
    <scope>NUCLEOTIDE SEQUENCE [LARGE SCALE GENOMIC DNA]</scope>
    <source>
        <strain>AS9601</strain>
    </source>
</reference>
<comment type="function">
    <text evidence="1">Required for maturation of urease via the functional incorporation of the urease nickel metallocenter.</text>
</comment>
<comment type="subunit">
    <text evidence="1">UreD, UreF and UreG form a complex that acts as a GTP-hydrolysis-dependent molecular chaperone, activating the urease apoprotein by helping to assemble the nickel containing metallocenter of UreC. The UreE protein probably delivers the nickel.</text>
</comment>
<comment type="subcellular location">
    <subcellularLocation>
        <location evidence="1">Cytoplasm</location>
    </subcellularLocation>
</comment>
<comment type="similarity">
    <text evidence="1">Belongs to the UreF family.</text>
</comment>
<protein>
    <recommendedName>
        <fullName evidence="1">Urease accessory protein UreF</fullName>
    </recommendedName>
</protein>
<organism>
    <name type="scientific">Prochlorococcus marinus (strain AS9601)</name>
    <dbReference type="NCBI Taxonomy" id="146891"/>
    <lineage>
        <taxon>Bacteria</taxon>
        <taxon>Bacillati</taxon>
        <taxon>Cyanobacteriota</taxon>
        <taxon>Cyanophyceae</taxon>
        <taxon>Synechococcales</taxon>
        <taxon>Prochlorococcaceae</taxon>
        <taxon>Prochlorococcus</taxon>
    </lineage>
</organism>
<feature type="chain" id="PRO_1000145132" description="Urease accessory protein UreF">
    <location>
        <begin position="1"/>
        <end position="228"/>
    </location>
</feature>
<gene>
    <name evidence="1" type="primary">ureF</name>
    <name type="ordered locus">A9601_08901</name>
</gene>
<accession>A2BQW3</accession>
<name>UREF_PROMS</name>
<sequence length="228" mass="26405">MSKSHLLKYLLISPNLPVGGFCYSEGMESYLHNKNLIDSNSVKDLIINELKIGQIRLDARLLLDFFDIFDEINEGKNLKGNLHKLMSLDKWILSSKDTLEIREQQIQMAKSLFDLTKEFGFEYLCKNNKKSSWPLAWSWACYCFKITKLEMIENFFYSWSANQLSAALRIIPIGATKAQLIQRDLLAIISKVSKEIMDKEIDDIYFGNVGLAMAQQNHNDLYTKLFRN</sequence>
<keyword id="KW-0143">Chaperone</keyword>
<keyword id="KW-0963">Cytoplasm</keyword>
<keyword id="KW-0996">Nickel insertion</keyword>
<evidence type="ECO:0000255" key="1">
    <source>
        <dbReference type="HAMAP-Rule" id="MF_01385"/>
    </source>
</evidence>
<dbReference type="EMBL" id="CP000551">
    <property type="protein sequence ID" value="ABM70174.1"/>
    <property type="molecule type" value="Genomic_DNA"/>
</dbReference>
<dbReference type="RefSeq" id="WP_011818331.1">
    <property type="nucleotide sequence ID" value="NC_008816.1"/>
</dbReference>
<dbReference type="SMR" id="A2BQW3"/>
<dbReference type="STRING" id="146891.A9601_08901"/>
<dbReference type="KEGG" id="pmb:A9601_08901"/>
<dbReference type="eggNOG" id="COG0830">
    <property type="taxonomic scope" value="Bacteria"/>
</dbReference>
<dbReference type="HOGENOM" id="CLU_049215_2_1_3"/>
<dbReference type="OrthoDB" id="9798772at2"/>
<dbReference type="Proteomes" id="UP000002590">
    <property type="component" value="Chromosome"/>
</dbReference>
<dbReference type="GO" id="GO:0005737">
    <property type="term" value="C:cytoplasm"/>
    <property type="evidence" value="ECO:0007669"/>
    <property type="project" value="UniProtKB-SubCell"/>
</dbReference>
<dbReference type="GO" id="GO:0016151">
    <property type="term" value="F:nickel cation binding"/>
    <property type="evidence" value="ECO:0007669"/>
    <property type="project" value="UniProtKB-UniRule"/>
</dbReference>
<dbReference type="Gene3D" id="1.10.4190.10">
    <property type="entry name" value="Urease accessory protein UreF"/>
    <property type="match status" value="1"/>
</dbReference>
<dbReference type="HAMAP" id="MF_01385">
    <property type="entry name" value="UreF"/>
    <property type="match status" value="1"/>
</dbReference>
<dbReference type="InterPro" id="IPR002639">
    <property type="entry name" value="UreF"/>
</dbReference>
<dbReference type="InterPro" id="IPR038277">
    <property type="entry name" value="UreF_sf"/>
</dbReference>
<dbReference type="PANTHER" id="PTHR33620">
    <property type="entry name" value="UREASE ACCESSORY PROTEIN F"/>
    <property type="match status" value="1"/>
</dbReference>
<dbReference type="PANTHER" id="PTHR33620:SF1">
    <property type="entry name" value="UREASE ACCESSORY PROTEIN F"/>
    <property type="match status" value="1"/>
</dbReference>
<dbReference type="Pfam" id="PF01730">
    <property type="entry name" value="UreF"/>
    <property type="match status" value="1"/>
</dbReference>
<dbReference type="PIRSF" id="PIRSF009467">
    <property type="entry name" value="Ureas_acces_UreF"/>
    <property type="match status" value="1"/>
</dbReference>